<dbReference type="EMBL" id="BA000001">
    <property type="protein sequence ID" value="BAA30584.1"/>
    <property type="molecule type" value="Genomic_DNA"/>
</dbReference>
<dbReference type="PIR" id="H71022">
    <property type="entry name" value="H71022"/>
</dbReference>
<dbReference type="RefSeq" id="WP_010885557.1">
    <property type="nucleotide sequence ID" value="NC_000961.1"/>
</dbReference>
<dbReference type="STRING" id="70601.gene:9378455"/>
<dbReference type="EnsemblBacteria" id="BAA30584">
    <property type="protein sequence ID" value="BAA30584"/>
    <property type="gene ID" value="BAA30584"/>
</dbReference>
<dbReference type="GeneID" id="1443795"/>
<dbReference type="KEGG" id="pho:PH1477"/>
<dbReference type="eggNOG" id="arCOG04477">
    <property type="taxonomic scope" value="Archaea"/>
</dbReference>
<dbReference type="OrthoDB" id="24613at2157"/>
<dbReference type="Proteomes" id="UP000000752">
    <property type="component" value="Chromosome"/>
</dbReference>
<dbReference type="HAMAP" id="MF_00498">
    <property type="entry name" value="UPF0179"/>
    <property type="match status" value="1"/>
</dbReference>
<dbReference type="InterPro" id="IPR005369">
    <property type="entry name" value="UPF0179"/>
</dbReference>
<dbReference type="NCBIfam" id="NF002253">
    <property type="entry name" value="PRK01177.1"/>
    <property type="match status" value="1"/>
</dbReference>
<dbReference type="PANTHER" id="PTHR40699">
    <property type="entry name" value="UPF0179 PROTEIN MJ1627"/>
    <property type="match status" value="1"/>
</dbReference>
<dbReference type="PANTHER" id="PTHR40699:SF1">
    <property type="entry name" value="UPF0179 PROTEIN MJ1627"/>
    <property type="match status" value="1"/>
</dbReference>
<dbReference type="Pfam" id="PF03684">
    <property type="entry name" value="UPF0179"/>
    <property type="match status" value="1"/>
</dbReference>
<dbReference type="PIRSF" id="PIRSF006595">
    <property type="entry name" value="UCP006595"/>
    <property type="match status" value="1"/>
</dbReference>
<reference key="1">
    <citation type="journal article" date="1998" name="DNA Res.">
        <title>Complete sequence and gene organization of the genome of a hyper-thermophilic archaebacterium, Pyrococcus horikoshii OT3.</title>
        <authorList>
            <person name="Kawarabayasi Y."/>
            <person name="Sawada M."/>
            <person name="Horikawa H."/>
            <person name="Haikawa Y."/>
            <person name="Hino Y."/>
            <person name="Yamamoto S."/>
            <person name="Sekine M."/>
            <person name="Baba S."/>
            <person name="Kosugi H."/>
            <person name="Hosoyama A."/>
            <person name="Nagai Y."/>
            <person name="Sakai M."/>
            <person name="Ogura K."/>
            <person name="Otsuka R."/>
            <person name="Nakazawa H."/>
            <person name="Takamiya M."/>
            <person name="Ohfuku Y."/>
            <person name="Funahashi T."/>
            <person name="Tanaka T."/>
            <person name="Kudoh Y."/>
            <person name="Yamazaki J."/>
            <person name="Kushida N."/>
            <person name="Oguchi A."/>
            <person name="Aoki K."/>
            <person name="Yoshizawa T."/>
            <person name="Nakamura Y."/>
            <person name="Robb F.T."/>
            <person name="Horikoshi K."/>
            <person name="Masuchi Y."/>
            <person name="Shizuya H."/>
            <person name="Kikuchi H."/>
        </authorList>
    </citation>
    <scope>NUCLEOTIDE SEQUENCE [LARGE SCALE GENOMIC DNA]</scope>
    <source>
        <strain>ATCC 700860 / DSM 12428 / JCM 9974 / NBRC 100139 / OT-3</strain>
    </source>
</reference>
<proteinExistence type="inferred from homology"/>
<organism>
    <name type="scientific">Pyrococcus horikoshii (strain ATCC 700860 / DSM 12428 / JCM 9974 / NBRC 100139 / OT-3)</name>
    <dbReference type="NCBI Taxonomy" id="70601"/>
    <lineage>
        <taxon>Archaea</taxon>
        <taxon>Methanobacteriati</taxon>
        <taxon>Methanobacteriota</taxon>
        <taxon>Thermococci</taxon>
        <taxon>Thermococcales</taxon>
        <taxon>Thermococcaceae</taxon>
        <taxon>Pyrococcus</taxon>
    </lineage>
</organism>
<accession>O59146</accession>
<sequence>MVITLVGEKLAKPGLEFIYYGPGEPCKTCRLARVCIGNLEPGRRYKIVRVRNIEHPCPLHEGKVRVVEVVEPAIEVLMEPRYAIVGSKIKLSFVECNDDDKAELVRPEGLFEGDLVKILEIVDDVECGGRKYKLVKVMREKG</sequence>
<feature type="chain" id="PRO_0000156875" description="UPF0179 protein PH1477">
    <location>
        <begin position="1"/>
        <end position="142"/>
    </location>
</feature>
<gene>
    <name type="ordered locus">PH1477</name>
</gene>
<evidence type="ECO:0000305" key="1"/>
<name>Y1477_PYRHO</name>
<comment type="similarity">
    <text evidence="1">Belongs to the UPF0179 family.</text>
</comment>
<protein>
    <recommendedName>
        <fullName>UPF0179 protein PH1477</fullName>
    </recommendedName>
</protein>